<sequence>MEWENHTILVEFFLKGLSGHPRLELLFFVLIFIMYVVILLGNGTLILISILDPHLHTPMYFFLGNLSFLDICYTTTSIPSTLVSFLSERKTISLSGCAVQMFLSLAMGTTECVLLGVMAFDRYVAICNPLRYPIIMSKDAYVPMAAGSWIIGAVNSAVQTVFVVQLPFCRNNIINHFTCEILAVMKLACADISGNEFILLVTTTLFLLTPLLLIIVSYTLIILSIFKISSSEGRSKPSSTCSARLTVVITFCGTIFLMYMKPKSQETLNSDDLDATDKLIFIFYRVMTPMMNPLIYSLRNKDVKEAVKHLLRRKNFNK</sequence>
<dbReference type="EMBL" id="AB065710">
    <property type="protein sequence ID" value="BAC05932.1"/>
    <property type="molecule type" value="Genomic_DNA"/>
</dbReference>
<dbReference type="EMBL" id="AL450426">
    <property type="status" value="NOT_ANNOTATED_CDS"/>
    <property type="molecule type" value="Genomic_DNA"/>
</dbReference>
<dbReference type="EMBL" id="BC136842">
    <property type="protein sequence ID" value="AAI36843.1"/>
    <property type="molecule type" value="mRNA"/>
</dbReference>
<dbReference type="EMBL" id="BC136843">
    <property type="protein sequence ID" value="AAI36844.1"/>
    <property type="molecule type" value="mRNA"/>
</dbReference>
<dbReference type="EMBL" id="BK004409">
    <property type="protein sequence ID" value="DAA04807.1"/>
    <property type="molecule type" value="Genomic_DNA"/>
</dbReference>
<dbReference type="CCDS" id="CCDS35091.1"/>
<dbReference type="RefSeq" id="NP_001004482.1">
    <property type="nucleotide sequence ID" value="NM_001004482.1"/>
</dbReference>
<dbReference type="SMR" id="Q8NGS8"/>
<dbReference type="BioGRID" id="126522">
    <property type="interactions" value="7"/>
</dbReference>
<dbReference type="FunCoup" id="Q8NGS8">
    <property type="interactions" value="416"/>
</dbReference>
<dbReference type="IntAct" id="Q8NGS8">
    <property type="interactions" value="2"/>
</dbReference>
<dbReference type="STRING" id="9606.ENSP00000363911"/>
<dbReference type="GlyCosmos" id="Q8NGS8">
    <property type="glycosylation" value="1 site, No reported glycans"/>
</dbReference>
<dbReference type="GlyGen" id="Q8NGS8">
    <property type="glycosylation" value="1 site"/>
</dbReference>
<dbReference type="iPTMnet" id="Q8NGS8"/>
<dbReference type="PhosphoSitePlus" id="Q8NGS8"/>
<dbReference type="BioMuta" id="OR13C5"/>
<dbReference type="DMDM" id="38372765"/>
<dbReference type="jPOST" id="Q8NGS8"/>
<dbReference type="PaxDb" id="9606-ENSP00000363911"/>
<dbReference type="Antibodypedia" id="74598">
    <property type="antibodies" value="72 antibodies from 17 providers"/>
</dbReference>
<dbReference type="DNASU" id="138799"/>
<dbReference type="Ensembl" id="ENST00000374779.3">
    <property type="protein sequence ID" value="ENSP00000363911.2"/>
    <property type="gene ID" value="ENSG00000277556.1"/>
</dbReference>
<dbReference type="GeneID" id="138799"/>
<dbReference type="KEGG" id="hsa:138799"/>
<dbReference type="MANE-Select" id="ENST00000374779.3">
    <property type="protein sequence ID" value="ENSP00000363911.2"/>
    <property type="RefSeq nucleotide sequence ID" value="NM_001004482.1"/>
    <property type="RefSeq protein sequence ID" value="NP_001004482.1"/>
</dbReference>
<dbReference type="UCSC" id="uc011lvp.2">
    <property type="organism name" value="human"/>
</dbReference>
<dbReference type="AGR" id="HGNC:15100"/>
<dbReference type="CTD" id="138799"/>
<dbReference type="DisGeNET" id="138799"/>
<dbReference type="GeneCards" id="OR13C5"/>
<dbReference type="HGNC" id="HGNC:15100">
    <property type="gene designation" value="OR13C5"/>
</dbReference>
<dbReference type="HPA" id="ENSG00000277556">
    <property type="expression patterns" value="Not detected"/>
</dbReference>
<dbReference type="neXtProt" id="NX_Q8NGS8"/>
<dbReference type="PharmGKB" id="PA32035"/>
<dbReference type="VEuPathDB" id="HostDB:ENSG00000277556"/>
<dbReference type="eggNOG" id="ENOG502T9K1">
    <property type="taxonomic scope" value="Eukaryota"/>
</dbReference>
<dbReference type="GeneTree" id="ENSGT01040000240406"/>
<dbReference type="HOGENOM" id="CLU_012526_1_2_1"/>
<dbReference type="InParanoid" id="Q8NGS8"/>
<dbReference type="OMA" id="ITFCGTI"/>
<dbReference type="OrthoDB" id="6144223at2759"/>
<dbReference type="PAN-GO" id="Q8NGS8">
    <property type="GO annotations" value="0 GO annotations based on evolutionary models"/>
</dbReference>
<dbReference type="PhylomeDB" id="Q8NGS8"/>
<dbReference type="TreeFam" id="TF352686"/>
<dbReference type="PathwayCommons" id="Q8NGS8"/>
<dbReference type="Reactome" id="R-HSA-9752946">
    <property type="pathway name" value="Expression and translocation of olfactory receptors"/>
</dbReference>
<dbReference type="SignaLink" id="Q8NGS8"/>
<dbReference type="BioGRID-ORCS" id="138799">
    <property type="hits" value="10 hits in 659 CRISPR screens"/>
</dbReference>
<dbReference type="GeneWiki" id="OR13C5"/>
<dbReference type="GenomeRNAi" id="138799"/>
<dbReference type="Pharos" id="Q8NGS8">
    <property type="development level" value="Tdark"/>
</dbReference>
<dbReference type="PRO" id="PR:Q8NGS8"/>
<dbReference type="Proteomes" id="UP000005640">
    <property type="component" value="Chromosome 9"/>
</dbReference>
<dbReference type="RNAct" id="Q8NGS8">
    <property type="molecule type" value="protein"/>
</dbReference>
<dbReference type="Bgee" id="ENSG00000277556">
    <property type="expression patterns" value="Expressed in male germ line stem cell (sensu Vertebrata) in testis and 10 other cell types or tissues"/>
</dbReference>
<dbReference type="GO" id="GO:0005654">
    <property type="term" value="C:nucleoplasm"/>
    <property type="evidence" value="ECO:0000314"/>
    <property type="project" value="HPA"/>
</dbReference>
<dbReference type="GO" id="GO:0005886">
    <property type="term" value="C:plasma membrane"/>
    <property type="evidence" value="ECO:0000314"/>
    <property type="project" value="HPA"/>
</dbReference>
<dbReference type="GO" id="GO:0004930">
    <property type="term" value="F:G protein-coupled receptor activity"/>
    <property type="evidence" value="ECO:0007669"/>
    <property type="project" value="UniProtKB-KW"/>
</dbReference>
<dbReference type="GO" id="GO:0004984">
    <property type="term" value="F:olfactory receptor activity"/>
    <property type="evidence" value="ECO:0000318"/>
    <property type="project" value="GO_Central"/>
</dbReference>
<dbReference type="GO" id="GO:0050911">
    <property type="term" value="P:detection of chemical stimulus involved in sensory perception of smell"/>
    <property type="evidence" value="ECO:0000318"/>
    <property type="project" value="GO_Central"/>
</dbReference>
<dbReference type="CDD" id="cd15430">
    <property type="entry name" value="7tmA_OR13-like"/>
    <property type="match status" value="1"/>
</dbReference>
<dbReference type="FunFam" id="1.20.1070.10:FF:000501">
    <property type="entry name" value="Olfactory receptor"/>
    <property type="match status" value="1"/>
</dbReference>
<dbReference type="Gene3D" id="1.20.1070.10">
    <property type="entry name" value="Rhodopsin 7-helix transmembrane proteins"/>
    <property type="match status" value="1"/>
</dbReference>
<dbReference type="InterPro" id="IPR000276">
    <property type="entry name" value="GPCR_Rhodpsn"/>
</dbReference>
<dbReference type="InterPro" id="IPR017452">
    <property type="entry name" value="GPCR_Rhodpsn_7TM"/>
</dbReference>
<dbReference type="InterPro" id="IPR000725">
    <property type="entry name" value="Olfact_rcpt"/>
</dbReference>
<dbReference type="PANTHER" id="PTHR26453">
    <property type="entry name" value="OLFACTORY RECEPTOR"/>
    <property type="match status" value="1"/>
</dbReference>
<dbReference type="Pfam" id="PF13853">
    <property type="entry name" value="7tm_4"/>
    <property type="match status" value="1"/>
</dbReference>
<dbReference type="PRINTS" id="PR00237">
    <property type="entry name" value="GPCRRHODOPSN"/>
</dbReference>
<dbReference type="PRINTS" id="PR00245">
    <property type="entry name" value="OLFACTORYR"/>
</dbReference>
<dbReference type="SUPFAM" id="SSF81321">
    <property type="entry name" value="Family A G protein-coupled receptor-like"/>
    <property type="match status" value="1"/>
</dbReference>
<dbReference type="PROSITE" id="PS00237">
    <property type="entry name" value="G_PROTEIN_RECEP_F1_1"/>
    <property type="match status" value="1"/>
</dbReference>
<dbReference type="PROSITE" id="PS50262">
    <property type="entry name" value="G_PROTEIN_RECEP_F1_2"/>
    <property type="match status" value="1"/>
</dbReference>
<gene>
    <name type="primary">OR13C5</name>
</gene>
<comment type="function">
    <text evidence="3">Odorant receptor.</text>
</comment>
<comment type="subcellular location">
    <subcellularLocation>
        <location>Cell membrane</location>
        <topology>Multi-pass membrane protein</topology>
    </subcellularLocation>
</comment>
<comment type="similarity">
    <text evidence="2">Belongs to the G-protein coupled receptor 1 family.</text>
</comment>
<comment type="online information" name="Human Olfactory Receptor Data Exploratorium (HORDE)">
    <link uri="http://genome.weizmann.ac.il/horde/card/index/symbol:OR13C5"/>
</comment>
<feature type="chain" id="PRO_0000150734" description="Olfactory receptor 13C5">
    <location>
        <begin position="1"/>
        <end position="318"/>
    </location>
</feature>
<feature type="topological domain" description="Extracellular" evidence="1">
    <location>
        <begin position="1"/>
        <end position="25"/>
    </location>
</feature>
<feature type="transmembrane region" description="Helical; Name=1" evidence="1">
    <location>
        <begin position="26"/>
        <end position="46"/>
    </location>
</feature>
<feature type="topological domain" description="Cytoplasmic" evidence="1">
    <location>
        <begin position="47"/>
        <end position="54"/>
    </location>
</feature>
<feature type="transmembrane region" description="Helical; Name=2" evidence="1">
    <location>
        <begin position="55"/>
        <end position="75"/>
    </location>
</feature>
<feature type="topological domain" description="Extracellular" evidence="1">
    <location>
        <begin position="76"/>
        <end position="99"/>
    </location>
</feature>
<feature type="transmembrane region" description="Helical; Name=3" evidence="1">
    <location>
        <begin position="100"/>
        <end position="120"/>
    </location>
</feature>
<feature type="topological domain" description="Cytoplasmic" evidence="1">
    <location>
        <begin position="121"/>
        <end position="139"/>
    </location>
</feature>
<feature type="transmembrane region" description="Helical; Name=4" evidence="1">
    <location>
        <begin position="140"/>
        <end position="160"/>
    </location>
</feature>
<feature type="topological domain" description="Extracellular" evidence="1">
    <location>
        <begin position="161"/>
        <end position="197"/>
    </location>
</feature>
<feature type="transmembrane region" description="Helical; Name=5" evidence="1">
    <location>
        <begin position="198"/>
        <end position="217"/>
    </location>
</feature>
<feature type="topological domain" description="Cytoplasmic" evidence="1">
    <location>
        <begin position="218"/>
        <end position="237"/>
    </location>
</feature>
<feature type="transmembrane region" description="Helical; Name=6" evidence="1">
    <location>
        <begin position="238"/>
        <end position="258"/>
    </location>
</feature>
<feature type="topological domain" description="Extracellular" evidence="1">
    <location>
        <begin position="259"/>
        <end position="277"/>
    </location>
</feature>
<feature type="transmembrane region" description="Helical; Name=7" evidence="1">
    <location>
        <begin position="278"/>
        <end position="298"/>
    </location>
</feature>
<feature type="topological domain" description="Cytoplasmic" evidence="1">
    <location>
        <begin position="299"/>
        <end position="318"/>
    </location>
</feature>
<feature type="glycosylation site" description="N-linked (GlcNAc...) asparagine" evidence="1">
    <location>
        <position position="5"/>
    </location>
</feature>
<feature type="disulfide bond" evidence="2">
    <location>
        <begin position="97"/>
        <end position="189"/>
    </location>
</feature>
<feature type="sequence variant" id="VAR_053299" description="In dbSNP:rs1851722.">
    <original>S</original>
    <variation>F</variation>
    <location>
        <position position="18"/>
    </location>
</feature>
<feature type="sequence variant" id="VAR_034306" description="In dbSNP:rs6479260.">
    <original>F</original>
    <variation>L</variation>
    <location>
        <position position="32"/>
    </location>
</feature>
<feature type="sequence variant" id="VAR_060032" description="In dbSNP:rs7042502.">
    <original>L</original>
    <variation>M</variation>
    <location>
        <position position="69"/>
    </location>
</feature>
<feature type="sequence variant" id="VAR_060033" description="In dbSNP:rs4629933.">
    <original>L</original>
    <variation>V</variation>
    <location>
        <position position="86"/>
    </location>
</feature>
<feature type="sequence variant" id="VAR_060034" description="In dbSNP:rs2417534.">
    <original>V</original>
    <variation>M</variation>
    <location>
        <position position="117"/>
    </location>
</feature>
<feature type="sequence variant" id="VAR_024132" description="In dbSNP:rs4117966.">
    <original>C</original>
    <variation>Y</variation>
    <location>
        <position position="189"/>
    </location>
</feature>
<feature type="sequence variant" id="VAR_053300" description="In dbSNP:rs6479259.">
    <original>N</original>
    <variation>S</variation>
    <location>
        <position position="195"/>
    </location>
</feature>
<feature type="sequence variant" id="VAR_024133" description="In dbSNP:rs1851724.">
    <original>M</original>
    <variation>T</variation>
    <location>
        <position position="258"/>
    </location>
</feature>
<feature type="sequence variant" id="VAR_024134" description="In dbSNP:rs1523678.">
    <original>I</original>
    <variation>V</variation>
    <location>
        <position position="282"/>
    </location>
</feature>
<feature type="sequence variant" id="VAR_024135" description="In dbSNP:rs1851725.">
    <original>M</original>
    <variation>T</variation>
    <location>
        <position position="290"/>
    </location>
</feature>
<reference key="1">
    <citation type="submission" date="2001-07" db="EMBL/GenBank/DDBJ databases">
        <title>Genome-wide discovery and analysis of human seven transmembrane helix receptor genes.</title>
        <authorList>
            <person name="Suwa M."/>
            <person name="Sato T."/>
            <person name="Okouchi I."/>
            <person name="Arita M."/>
            <person name="Futami K."/>
            <person name="Matsumoto S."/>
            <person name="Tsutsumi S."/>
            <person name="Aburatani H."/>
            <person name="Asai K."/>
            <person name="Akiyama Y."/>
        </authorList>
    </citation>
    <scope>NUCLEOTIDE SEQUENCE [GENOMIC DNA]</scope>
</reference>
<reference key="2">
    <citation type="journal article" date="2004" name="Nature">
        <title>DNA sequence and analysis of human chromosome 9.</title>
        <authorList>
            <person name="Humphray S.J."/>
            <person name="Oliver K."/>
            <person name="Hunt A.R."/>
            <person name="Plumb R.W."/>
            <person name="Loveland J.E."/>
            <person name="Howe K.L."/>
            <person name="Andrews T.D."/>
            <person name="Searle S."/>
            <person name="Hunt S.E."/>
            <person name="Scott C.E."/>
            <person name="Jones M.C."/>
            <person name="Ainscough R."/>
            <person name="Almeida J.P."/>
            <person name="Ambrose K.D."/>
            <person name="Ashwell R.I.S."/>
            <person name="Babbage A.K."/>
            <person name="Babbage S."/>
            <person name="Bagguley C.L."/>
            <person name="Bailey J."/>
            <person name="Banerjee R."/>
            <person name="Barker D.J."/>
            <person name="Barlow K.F."/>
            <person name="Bates K."/>
            <person name="Beasley H."/>
            <person name="Beasley O."/>
            <person name="Bird C.P."/>
            <person name="Bray-Allen S."/>
            <person name="Brown A.J."/>
            <person name="Brown J.Y."/>
            <person name="Burford D."/>
            <person name="Burrill W."/>
            <person name="Burton J."/>
            <person name="Carder C."/>
            <person name="Carter N.P."/>
            <person name="Chapman J.C."/>
            <person name="Chen Y."/>
            <person name="Clarke G."/>
            <person name="Clark S.Y."/>
            <person name="Clee C.M."/>
            <person name="Clegg S."/>
            <person name="Collier R.E."/>
            <person name="Corby N."/>
            <person name="Crosier M."/>
            <person name="Cummings A.T."/>
            <person name="Davies J."/>
            <person name="Dhami P."/>
            <person name="Dunn M."/>
            <person name="Dutta I."/>
            <person name="Dyer L.W."/>
            <person name="Earthrowl M.E."/>
            <person name="Faulkner L."/>
            <person name="Fleming C.J."/>
            <person name="Frankish A."/>
            <person name="Frankland J.A."/>
            <person name="French L."/>
            <person name="Fricker D.G."/>
            <person name="Garner P."/>
            <person name="Garnett J."/>
            <person name="Ghori J."/>
            <person name="Gilbert J.G.R."/>
            <person name="Glison C."/>
            <person name="Grafham D.V."/>
            <person name="Gribble S."/>
            <person name="Griffiths C."/>
            <person name="Griffiths-Jones S."/>
            <person name="Grocock R."/>
            <person name="Guy J."/>
            <person name="Hall R.E."/>
            <person name="Hammond S."/>
            <person name="Harley J.L."/>
            <person name="Harrison E.S.I."/>
            <person name="Hart E.A."/>
            <person name="Heath P.D."/>
            <person name="Henderson C.D."/>
            <person name="Hopkins B.L."/>
            <person name="Howard P.J."/>
            <person name="Howden P.J."/>
            <person name="Huckle E."/>
            <person name="Johnson C."/>
            <person name="Johnson D."/>
            <person name="Joy A.A."/>
            <person name="Kay M."/>
            <person name="Keenan S."/>
            <person name="Kershaw J.K."/>
            <person name="Kimberley A.M."/>
            <person name="King A."/>
            <person name="Knights A."/>
            <person name="Laird G.K."/>
            <person name="Langford C."/>
            <person name="Lawlor S."/>
            <person name="Leongamornlert D.A."/>
            <person name="Leversha M."/>
            <person name="Lloyd C."/>
            <person name="Lloyd D.M."/>
            <person name="Lovell J."/>
            <person name="Martin S."/>
            <person name="Mashreghi-Mohammadi M."/>
            <person name="Matthews L."/>
            <person name="McLaren S."/>
            <person name="McLay K.E."/>
            <person name="McMurray A."/>
            <person name="Milne S."/>
            <person name="Nickerson T."/>
            <person name="Nisbett J."/>
            <person name="Nordsiek G."/>
            <person name="Pearce A.V."/>
            <person name="Peck A.I."/>
            <person name="Porter K.M."/>
            <person name="Pandian R."/>
            <person name="Pelan S."/>
            <person name="Phillimore B."/>
            <person name="Povey S."/>
            <person name="Ramsey Y."/>
            <person name="Rand V."/>
            <person name="Scharfe M."/>
            <person name="Sehra H.K."/>
            <person name="Shownkeen R."/>
            <person name="Sims S.K."/>
            <person name="Skuce C.D."/>
            <person name="Smith M."/>
            <person name="Steward C.A."/>
            <person name="Swarbreck D."/>
            <person name="Sycamore N."/>
            <person name="Tester J."/>
            <person name="Thorpe A."/>
            <person name="Tracey A."/>
            <person name="Tromans A."/>
            <person name="Thomas D.W."/>
            <person name="Wall M."/>
            <person name="Wallis J.M."/>
            <person name="West A.P."/>
            <person name="Whitehead S.L."/>
            <person name="Willey D.L."/>
            <person name="Williams S.A."/>
            <person name="Wilming L."/>
            <person name="Wray P.W."/>
            <person name="Young L."/>
            <person name="Ashurst J.L."/>
            <person name="Coulson A."/>
            <person name="Blocker H."/>
            <person name="Durbin R.M."/>
            <person name="Sulston J.E."/>
            <person name="Hubbard T."/>
            <person name="Jackson M.J."/>
            <person name="Bentley D.R."/>
            <person name="Beck S."/>
            <person name="Rogers J."/>
            <person name="Dunham I."/>
        </authorList>
    </citation>
    <scope>NUCLEOTIDE SEQUENCE [LARGE SCALE GENOMIC DNA]</scope>
</reference>
<reference key="3">
    <citation type="journal article" date="2004" name="Genome Res.">
        <title>The status, quality, and expansion of the NIH full-length cDNA project: the Mammalian Gene Collection (MGC).</title>
        <authorList>
            <consortium name="The MGC Project Team"/>
        </authorList>
    </citation>
    <scope>NUCLEOTIDE SEQUENCE [LARGE SCALE MRNA]</scope>
    <source>
        <tissue>Testis</tissue>
    </source>
</reference>
<reference key="4">
    <citation type="journal article" date="2004" name="Proc. Natl. Acad. Sci. U.S.A.">
        <title>The human olfactory receptor gene family.</title>
        <authorList>
            <person name="Malnic B."/>
            <person name="Godfrey P.A."/>
            <person name="Buck L.B."/>
        </authorList>
    </citation>
    <scope>IDENTIFICATION</scope>
</reference>
<reference key="5">
    <citation type="journal article" date="2004" name="Proc. Natl. Acad. Sci. U.S.A.">
        <authorList>
            <person name="Malnic B."/>
            <person name="Godfrey P.A."/>
            <person name="Buck L.B."/>
        </authorList>
    </citation>
    <scope>ERRATUM OF PUBMED:14983052</scope>
</reference>
<name>O13C5_HUMAN</name>
<proteinExistence type="evidence at transcript level"/>
<protein>
    <recommendedName>
        <fullName>Olfactory receptor 13C5</fullName>
    </recommendedName>
    <alternativeName>
        <fullName>Olfactory receptor OR9-11</fullName>
    </alternativeName>
</protein>
<accession>Q8NGS8</accession>
<accession>B2RNE5</accession>
<accession>B9EGW5</accession>
<accession>Q6IF53</accession>
<evidence type="ECO:0000255" key="1"/>
<evidence type="ECO:0000255" key="2">
    <source>
        <dbReference type="PROSITE-ProRule" id="PRU00521"/>
    </source>
</evidence>
<evidence type="ECO:0000305" key="3"/>
<keyword id="KW-1003">Cell membrane</keyword>
<keyword id="KW-1015">Disulfide bond</keyword>
<keyword id="KW-0297">G-protein coupled receptor</keyword>
<keyword id="KW-0325">Glycoprotein</keyword>
<keyword id="KW-0472">Membrane</keyword>
<keyword id="KW-0552">Olfaction</keyword>
<keyword id="KW-0675">Receptor</keyword>
<keyword id="KW-1185">Reference proteome</keyword>
<keyword id="KW-0716">Sensory transduction</keyword>
<keyword id="KW-0807">Transducer</keyword>
<keyword id="KW-0812">Transmembrane</keyword>
<keyword id="KW-1133">Transmembrane helix</keyword>
<organism>
    <name type="scientific">Homo sapiens</name>
    <name type="common">Human</name>
    <dbReference type="NCBI Taxonomy" id="9606"/>
    <lineage>
        <taxon>Eukaryota</taxon>
        <taxon>Metazoa</taxon>
        <taxon>Chordata</taxon>
        <taxon>Craniata</taxon>
        <taxon>Vertebrata</taxon>
        <taxon>Euteleostomi</taxon>
        <taxon>Mammalia</taxon>
        <taxon>Eutheria</taxon>
        <taxon>Euarchontoglires</taxon>
        <taxon>Primates</taxon>
        <taxon>Haplorrhini</taxon>
        <taxon>Catarrhini</taxon>
        <taxon>Hominidae</taxon>
        <taxon>Homo</taxon>
    </lineage>
</organism>